<dbReference type="EC" id="7.1.2.2"/>
<dbReference type="EMBL" id="AB004247">
    <property type="protein sequence ID" value="BAA87891.1"/>
    <property type="molecule type" value="mRNA"/>
</dbReference>
<dbReference type="PDB" id="7UW9">
    <property type="method" value="EM"/>
    <property type="resolution" value="4.20 A"/>
    <property type="chains" value="A/C/E=1-623"/>
</dbReference>
<dbReference type="PDB" id="7UWA">
    <property type="method" value="EM"/>
    <property type="resolution" value="4.30 A"/>
    <property type="chains" value="A/C/E=1-623"/>
</dbReference>
<dbReference type="PDB" id="7UWB">
    <property type="method" value="EM"/>
    <property type="resolution" value="3.90 A"/>
    <property type="chains" value="A/C/E=1-623"/>
</dbReference>
<dbReference type="PDB" id="7UWC">
    <property type="method" value="EM"/>
    <property type="resolution" value="4.00 A"/>
    <property type="chains" value="A/C/E=1-623"/>
</dbReference>
<dbReference type="PDB" id="7UWD">
    <property type="method" value="EM"/>
    <property type="resolution" value="4.10 A"/>
    <property type="chains" value="A/C/E=1-623"/>
</dbReference>
<dbReference type="PDBsum" id="7UW9"/>
<dbReference type="PDBsum" id="7UWA"/>
<dbReference type="PDBsum" id="7UWB"/>
<dbReference type="PDBsum" id="7UWC"/>
<dbReference type="PDBsum" id="7UWD"/>
<dbReference type="EMDB" id="EMD-26825"/>
<dbReference type="EMDB" id="EMD-26826"/>
<dbReference type="EMDB" id="EMD-26827"/>
<dbReference type="EMDB" id="EMD-26828"/>
<dbReference type="EMDB" id="EMD-26829"/>
<dbReference type="SMR" id="Q9SM09"/>
<dbReference type="GO" id="GO:0000325">
    <property type="term" value="C:plant-type vacuole"/>
    <property type="evidence" value="ECO:0007669"/>
    <property type="project" value="TreeGrafter"/>
</dbReference>
<dbReference type="GO" id="GO:0033180">
    <property type="term" value="C:proton-transporting V-type ATPase, V1 domain"/>
    <property type="evidence" value="ECO:0007669"/>
    <property type="project" value="InterPro"/>
</dbReference>
<dbReference type="GO" id="GO:0005524">
    <property type="term" value="F:ATP binding"/>
    <property type="evidence" value="ECO:0007669"/>
    <property type="project" value="UniProtKB-KW"/>
</dbReference>
<dbReference type="GO" id="GO:0016887">
    <property type="term" value="F:ATP hydrolysis activity"/>
    <property type="evidence" value="ECO:0007669"/>
    <property type="project" value="InterPro"/>
</dbReference>
<dbReference type="GO" id="GO:0046961">
    <property type="term" value="F:proton-transporting ATPase activity, rotational mechanism"/>
    <property type="evidence" value="ECO:0007669"/>
    <property type="project" value="InterPro"/>
</dbReference>
<dbReference type="GO" id="GO:0046034">
    <property type="term" value="P:ATP metabolic process"/>
    <property type="evidence" value="ECO:0007669"/>
    <property type="project" value="InterPro"/>
</dbReference>
<dbReference type="CDD" id="cd18111">
    <property type="entry name" value="ATP-synt_V_A-type_alpha_C"/>
    <property type="match status" value="1"/>
</dbReference>
<dbReference type="CDD" id="cd18119">
    <property type="entry name" value="ATP-synt_V_A-type_alpha_N"/>
    <property type="match status" value="1"/>
</dbReference>
<dbReference type="CDD" id="cd01134">
    <property type="entry name" value="V_A-ATPase_A"/>
    <property type="match status" value="1"/>
</dbReference>
<dbReference type="FunFam" id="1.10.1140.10:FF:000002">
    <property type="entry name" value="V-type proton ATPase catalytic subunit A"/>
    <property type="match status" value="1"/>
</dbReference>
<dbReference type="FunFam" id="2.40.30.20:FF:000002">
    <property type="entry name" value="V-type proton ATPase catalytic subunit A"/>
    <property type="match status" value="1"/>
</dbReference>
<dbReference type="FunFam" id="2.40.50.100:FF:000008">
    <property type="entry name" value="V-type proton ATPase catalytic subunit A"/>
    <property type="match status" value="1"/>
</dbReference>
<dbReference type="FunFam" id="3.40.50.300:FF:000052">
    <property type="entry name" value="V-type proton ATPase catalytic subunit A"/>
    <property type="match status" value="1"/>
</dbReference>
<dbReference type="Gene3D" id="2.40.30.20">
    <property type="match status" value="1"/>
</dbReference>
<dbReference type="Gene3D" id="2.40.50.100">
    <property type="match status" value="1"/>
</dbReference>
<dbReference type="Gene3D" id="1.10.1140.10">
    <property type="entry name" value="Bovine Mitochondrial F1-atpase, Atp Synthase Beta Chain, Chain D, domain 3"/>
    <property type="match status" value="1"/>
</dbReference>
<dbReference type="Gene3D" id="3.40.50.300">
    <property type="entry name" value="P-loop containing nucleotide triphosphate hydrolases"/>
    <property type="match status" value="1"/>
</dbReference>
<dbReference type="HAMAP" id="MF_00309">
    <property type="entry name" value="ATP_synth_A_arch"/>
    <property type="match status" value="1"/>
</dbReference>
<dbReference type="InterPro" id="IPR055190">
    <property type="entry name" value="ATP-synt_VA_C"/>
</dbReference>
<dbReference type="InterPro" id="IPR031686">
    <property type="entry name" value="ATP-synth_a_Xtn"/>
</dbReference>
<dbReference type="InterPro" id="IPR023366">
    <property type="entry name" value="ATP_synth_asu-like_sf"/>
</dbReference>
<dbReference type="InterPro" id="IPR020003">
    <property type="entry name" value="ATPase_a/bsu_AS"/>
</dbReference>
<dbReference type="InterPro" id="IPR004100">
    <property type="entry name" value="ATPase_F1/V1/A1_a/bsu_N"/>
</dbReference>
<dbReference type="InterPro" id="IPR036121">
    <property type="entry name" value="ATPase_F1/V1/A1_a/bsu_N_sf"/>
</dbReference>
<dbReference type="InterPro" id="IPR000194">
    <property type="entry name" value="ATPase_F1/V1/A1_a/bsu_nucl-bd"/>
</dbReference>
<dbReference type="InterPro" id="IPR024034">
    <property type="entry name" value="ATPase_F1/V1_b/a_C"/>
</dbReference>
<dbReference type="InterPro" id="IPR005725">
    <property type="entry name" value="ATPase_V1-cplx_asu"/>
</dbReference>
<dbReference type="InterPro" id="IPR027417">
    <property type="entry name" value="P-loop_NTPase"/>
</dbReference>
<dbReference type="InterPro" id="IPR022878">
    <property type="entry name" value="V-ATPase_asu"/>
</dbReference>
<dbReference type="NCBIfam" id="NF003220">
    <property type="entry name" value="PRK04192.1"/>
    <property type="match status" value="1"/>
</dbReference>
<dbReference type="NCBIfam" id="TIGR01042">
    <property type="entry name" value="V-ATPase_V1_A"/>
    <property type="match status" value="1"/>
</dbReference>
<dbReference type="PANTHER" id="PTHR43607:SF1">
    <property type="entry name" value="H(+)-TRANSPORTING TWO-SECTOR ATPASE"/>
    <property type="match status" value="1"/>
</dbReference>
<dbReference type="PANTHER" id="PTHR43607">
    <property type="entry name" value="V-TYPE PROTON ATPASE CATALYTIC SUBUNIT A"/>
    <property type="match status" value="1"/>
</dbReference>
<dbReference type="Pfam" id="PF00006">
    <property type="entry name" value="ATP-synt_ab"/>
    <property type="match status" value="1"/>
</dbReference>
<dbReference type="Pfam" id="PF02874">
    <property type="entry name" value="ATP-synt_ab_N"/>
    <property type="match status" value="1"/>
</dbReference>
<dbReference type="Pfam" id="PF16886">
    <property type="entry name" value="ATP-synt_ab_Xtn"/>
    <property type="match status" value="1"/>
</dbReference>
<dbReference type="Pfam" id="PF22919">
    <property type="entry name" value="ATP-synt_VA_C"/>
    <property type="match status" value="1"/>
</dbReference>
<dbReference type="SUPFAM" id="SSF47917">
    <property type="entry name" value="C-terminal domain of alpha and beta subunits of F1 ATP synthase"/>
    <property type="match status" value="1"/>
</dbReference>
<dbReference type="SUPFAM" id="SSF50615">
    <property type="entry name" value="N-terminal domain of alpha and beta subunits of F1 ATP synthase"/>
    <property type="match status" value="1"/>
</dbReference>
<dbReference type="SUPFAM" id="SSF52540">
    <property type="entry name" value="P-loop containing nucleoside triphosphate hydrolases"/>
    <property type="match status" value="1"/>
</dbReference>
<dbReference type="PROSITE" id="PS00152">
    <property type="entry name" value="ATPASE_ALPHA_BETA"/>
    <property type="match status" value="1"/>
</dbReference>
<proteinExistence type="evidence at protein level"/>
<comment type="function">
    <text>Catalytic subunit of the peripheral V1 complex of vacuolar ATPase. V-ATPase vacuolar ATPase is responsible for acidifying a variety of intracellular compartments in eukaryotic cells.</text>
</comment>
<comment type="catalytic activity">
    <reaction>
        <text>ATP + H2O + 4 H(+)(in) = ADP + phosphate + 5 H(+)(out)</text>
        <dbReference type="Rhea" id="RHEA:57720"/>
        <dbReference type="ChEBI" id="CHEBI:15377"/>
        <dbReference type="ChEBI" id="CHEBI:15378"/>
        <dbReference type="ChEBI" id="CHEBI:30616"/>
        <dbReference type="ChEBI" id="CHEBI:43474"/>
        <dbReference type="ChEBI" id="CHEBI:456216"/>
        <dbReference type="EC" id="7.1.2.2"/>
    </reaction>
</comment>
<comment type="subunit">
    <text>V-ATPase is a heteromultimeric enzyme composed of a peripheral catalytic V1 complex (main components: subunits A, B, C, D, E, and F) attached to an integral membrane V0 proton pore complex (main component: the proteolipid protein).</text>
</comment>
<comment type="similarity">
    <text evidence="2">Belongs to the ATPase alpha/beta chains family.</text>
</comment>
<evidence type="ECO:0000255" key="1"/>
<evidence type="ECO:0000305" key="2"/>
<feature type="chain" id="PRO_0000144577" description="V-type proton ATPase catalytic subunit A">
    <location>
        <begin position="1"/>
        <end position="623"/>
    </location>
</feature>
<feature type="binding site" evidence="1">
    <location>
        <begin position="252"/>
        <end position="259"/>
    </location>
    <ligand>
        <name>ATP</name>
        <dbReference type="ChEBI" id="CHEBI:30616"/>
    </ligand>
</feature>
<reference key="1">
    <citation type="journal article" date="1998" name="Biochim. Biophys. Acta">
        <title>Cloning and expression analysis of vacuolar H+-ATPase 69-kDa catalytic subunit cDNA in citrus (Citrus unshiu Marc.).</title>
        <authorList>
            <person name="Takanokura Y."/>
            <person name="Komatsu A."/>
            <person name="Omura M."/>
            <person name="Akihama T."/>
        </authorList>
    </citation>
    <scope>NUCLEOTIDE SEQUENCE [MRNA]</scope>
    <source>
        <strain>cv. Miyagawa-Wase</strain>
        <tissue>Juice tissue</tissue>
    </source>
</reference>
<name>VATA_CITUN</name>
<keyword id="KW-0002">3D-structure</keyword>
<keyword id="KW-0067">ATP-binding</keyword>
<keyword id="KW-0375">Hydrogen ion transport</keyword>
<keyword id="KW-0406">Ion transport</keyword>
<keyword id="KW-0547">Nucleotide-binding</keyword>
<keyword id="KW-1278">Translocase</keyword>
<keyword id="KW-0813">Transport</keyword>
<protein>
    <recommendedName>
        <fullName>V-type proton ATPase catalytic subunit A</fullName>
        <shortName>V-ATPase subunit A</shortName>
        <ecNumber>7.1.2.2</ecNumber>
    </recommendedName>
    <alternativeName>
        <fullName>V-ATPase 69 kDa subunit</fullName>
    </alternativeName>
    <alternativeName>
        <fullName>Vacuolar proton pump subunit alpha</fullName>
    </alternativeName>
</protein>
<sequence length="623" mass="68681">MPSVYGARLTTFEDEEKESEYGYVRKVSGPVVIADGMNGAAMYELVRVGHDNLIGEIIRLEGDSATIQVYEETAGLMVNDPVLRTHKPLSVELGPGILGNIFDGIQRPLKTIAIRSGDVYIPRGVSVPALDKDTLWEFQPKKIGEGDLLTGGDLYATVFENSLMQHHVALPPDAMGKVTYVAPAGQYSLKDTVLELEFQGVKKSFTMLQAWPVRTPRPVSSKLAADTPLLTGQRVLDALFPSVLGGTCAIPGAFGCGKTVISQALSKYSNSDTVVYVGCGERGNEMAEVLMDFPQLTMTLPDGREESVMKRTTLVANTSNMPVAAREASIYTGITIAEYFRDMGYNVSMMADSTSRWAEALREISGRLAEMPADSGYPAYLAARLASFYERAGKVKCLGGPERTGSVTIVGAVSPPGGDFSDPVTSATLSIVQVFWGLDKKLAQRKHFPSVNWLISYSKYSTALESFYEQFDPDFINIRTKAREVLQREDDLNEIVQLVGKDALAEGDKITLETAKLLREDYLAQNAFTPYDKFCPFYKSVWMMRNIIHFYNLANQAVEKGAGMDGQKITYTLIKHRLGDLFYRLVSQKFEDPAEGEPALVAKFKKLHEDLTAGFRALEDETR</sequence>
<accession>Q9SM09</accession>
<organism>
    <name type="scientific">Citrus unshiu</name>
    <name type="common">Satsuma mandarin</name>
    <name type="synonym">Citrus nobilis var. unshiu</name>
    <dbReference type="NCBI Taxonomy" id="55188"/>
    <lineage>
        <taxon>Eukaryota</taxon>
        <taxon>Viridiplantae</taxon>
        <taxon>Streptophyta</taxon>
        <taxon>Embryophyta</taxon>
        <taxon>Tracheophyta</taxon>
        <taxon>Spermatophyta</taxon>
        <taxon>Magnoliopsida</taxon>
        <taxon>eudicotyledons</taxon>
        <taxon>Gunneridae</taxon>
        <taxon>Pentapetalae</taxon>
        <taxon>rosids</taxon>
        <taxon>malvids</taxon>
        <taxon>Sapindales</taxon>
        <taxon>Rutaceae</taxon>
        <taxon>Aurantioideae</taxon>
        <taxon>Citrus</taxon>
    </lineage>
</organism>